<comment type="function">
    <text evidence="1">Catalyzes the attachment of tyrosine to tRNA(Tyr) in a two-step reaction: tyrosine is first activated by ATP to form Tyr-AMP and then transferred to the acceptor end of tRNA(Tyr).</text>
</comment>
<comment type="catalytic activity">
    <reaction evidence="1">
        <text>tRNA(Tyr) + L-tyrosine + ATP = L-tyrosyl-tRNA(Tyr) + AMP + diphosphate + H(+)</text>
        <dbReference type="Rhea" id="RHEA:10220"/>
        <dbReference type="Rhea" id="RHEA-COMP:9706"/>
        <dbReference type="Rhea" id="RHEA-COMP:9707"/>
        <dbReference type="ChEBI" id="CHEBI:15378"/>
        <dbReference type="ChEBI" id="CHEBI:30616"/>
        <dbReference type="ChEBI" id="CHEBI:33019"/>
        <dbReference type="ChEBI" id="CHEBI:58315"/>
        <dbReference type="ChEBI" id="CHEBI:78442"/>
        <dbReference type="ChEBI" id="CHEBI:78536"/>
        <dbReference type="ChEBI" id="CHEBI:456215"/>
        <dbReference type="EC" id="6.1.1.1"/>
    </reaction>
</comment>
<comment type="subunit">
    <text evidence="1">Homodimer.</text>
</comment>
<comment type="subcellular location">
    <subcellularLocation>
        <location evidence="1">Cytoplasm</location>
    </subcellularLocation>
</comment>
<comment type="similarity">
    <text evidence="1">Belongs to the class-I aminoacyl-tRNA synthetase family. TyrS type 1 subfamily.</text>
</comment>
<dbReference type="EC" id="6.1.1.1" evidence="1"/>
<dbReference type="EMBL" id="CP001078">
    <property type="protein sequence ID" value="ACD53603.1"/>
    <property type="molecule type" value="Genomic_DNA"/>
</dbReference>
<dbReference type="RefSeq" id="WP_012451468.1">
    <property type="nucleotide sequence ID" value="NC_010723.1"/>
</dbReference>
<dbReference type="SMR" id="B2UYM8"/>
<dbReference type="KEGG" id="cbt:CLH_2913"/>
<dbReference type="HOGENOM" id="CLU_024003_0_3_9"/>
<dbReference type="GO" id="GO:0005829">
    <property type="term" value="C:cytosol"/>
    <property type="evidence" value="ECO:0007669"/>
    <property type="project" value="TreeGrafter"/>
</dbReference>
<dbReference type="GO" id="GO:0005524">
    <property type="term" value="F:ATP binding"/>
    <property type="evidence" value="ECO:0007669"/>
    <property type="project" value="UniProtKB-UniRule"/>
</dbReference>
<dbReference type="GO" id="GO:0003723">
    <property type="term" value="F:RNA binding"/>
    <property type="evidence" value="ECO:0007669"/>
    <property type="project" value="UniProtKB-KW"/>
</dbReference>
<dbReference type="GO" id="GO:0004831">
    <property type="term" value="F:tyrosine-tRNA ligase activity"/>
    <property type="evidence" value="ECO:0007669"/>
    <property type="project" value="UniProtKB-UniRule"/>
</dbReference>
<dbReference type="GO" id="GO:0006437">
    <property type="term" value="P:tyrosyl-tRNA aminoacylation"/>
    <property type="evidence" value="ECO:0007669"/>
    <property type="project" value="UniProtKB-UniRule"/>
</dbReference>
<dbReference type="CDD" id="cd00165">
    <property type="entry name" value="S4"/>
    <property type="match status" value="1"/>
</dbReference>
<dbReference type="CDD" id="cd00805">
    <property type="entry name" value="TyrRS_core"/>
    <property type="match status" value="1"/>
</dbReference>
<dbReference type="FunFam" id="1.10.240.10:FF:000001">
    <property type="entry name" value="Tyrosine--tRNA ligase"/>
    <property type="match status" value="1"/>
</dbReference>
<dbReference type="FunFam" id="3.40.50.620:FF:000008">
    <property type="entry name" value="Tyrosine--tRNA ligase"/>
    <property type="match status" value="1"/>
</dbReference>
<dbReference type="Gene3D" id="3.40.50.620">
    <property type="entry name" value="HUPs"/>
    <property type="match status" value="1"/>
</dbReference>
<dbReference type="Gene3D" id="3.10.290.10">
    <property type="entry name" value="RNA-binding S4 domain"/>
    <property type="match status" value="1"/>
</dbReference>
<dbReference type="Gene3D" id="1.10.240.10">
    <property type="entry name" value="Tyrosyl-Transfer RNA Synthetase"/>
    <property type="match status" value="1"/>
</dbReference>
<dbReference type="HAMAP" id="MF_02006">
    <property type="entry name" value="Tyr_tRNA_synth_type1"/>
    <property type="match status" value="1"/>
</dbReference>
<dbReference type="InterPro" id="IPR001412">
    <property type="entry name" value="aa-tRNA-synth_I_CS"/>
</dbReference>
<dbReference type="InterPro" id="IPR002305">
    <property type="entry name" value="aa-tRNA-synth_Ic"/>
</dbReference>
<dbReference type="InterPro" id="IPR014729">
    <property type="entry name" value="Rossmann-like_a/b/a_fold"/>
</dbReference>
<dbReference type="InterPro" id="IPR036986">
    <property type="entry name" value="S4_RNA-bd_sf"/>
</dbReference>
<dbReference type="InterPro" id="IPR054608">
    <property type="entry name" value="SYY-like_C"/>
</dbReference>
<dbReference type="InterPro" id="IPR002307">
    <property type="entry name" value="Tyr-tRNA-ligase"/>
</dbReference>
<dbReference type="InterPro" id="IPR024088">
    <property type="entry name" value="Tyr-tRNA-ligase_bac-type"/>
</dbReference>
<dbReference type="InterPro" id="IPR024107">
    <property type="entry name" value="Tyr-tRNA-ligase_bac_1"/>
</dbReference>
<dbReference type="NCBIfam" id="TIGR00234">
    <property type="entry name" value="tyrS"/>
    <property type="match status" value="1"/>
</dbReference>
<dbReference type="PANTHER" id="PTHR11766:SF0">
    <property type="entry name" value="TYROSINE--TRNA LIGASE, MITOCHONDRIAL"/>
    <property type="match status" value="1"/>
</dbReference>
<dbReference type="PANTHER" id="PTHR11766">
    <property type="entry name" value="TYROSYL-TRNA SYNTHETASE"/>
    <property type="match status" value="1"/>
</dbReference>
<dbReference type="Pfam" id="PF22421">
    <property type="entry name" value="SYY_C-terminal"/>
    <property type="match status" value="1"/>
</dbReference>
<dbReference type="Pfam" id="PF00579">
    <property type="entry name" value="tRNA-synt_1b"/>
    <property type="match status" value="1"/>
</dbReference>
<dbReference type="PRINTS" id="PR01040">
    <property type="entry name" value="TRNASYNTHTYR"/>
</dbReference>
<dbReference type="SUPFAM" id="SSF55174">
    <property type="entry name" value="Alpha-L RNA-binding motif"/>
    <property type="match status" value="1"/>
</dbReference>
<dbReference type="SUPFAM" id="SSF52374">
    <property type="entry name" value="Nucleotidylyl transferase"/>
    <property type="match status" value="1"/>
</dbReference>
<dbReference type="PROSITE" id="PS00178">
    <property type="entry name" value="AA_TRNA_LIGASE_I"/>
    <property type="match status" value="1"/>
</dbReference>
<dbReference type="PROSITE" id="PS50889">
    <property type="entry name" value="S4"/>
    <property type="match status" value="1"/>
</dbReference>
<keyword id="KW-0030">Aminoacyl-tRNA synthetase</keyword>
<keyword id="KW-0067">ATP-binding</keyword>
<keyword id="KW-0963">Cytoplasm</keyword>
<keyword id="KW-0436">Ligase</keyword>
<keyword id="KW-0547">Nucleotide-binding</keyword>
<keyword id="KW-0648">Protein biosynthesis</keyword>
<keyword id="KW-0694">RNA-binding</keyword>
<accession>B2UYM8</accession>
<organism>
    <name type="scientific">Clostridium botulinum (strain Alaska E43 / Type E3)</name>
    <dbReference type="NCBI Taxonomy" id="508767"/>
    <lineage>
        <taxon>Bacteria</taxon>
        <taxon>Bacillati</taxon>
        <taxon>Bacillota</taxon>
        <taxon>Clostridia</taxon>
        <taxon>Eubacteriales</taxon>
        <taxon>Clostridiaceae</taxon>
        <taxon>Clostridium</taxon>
    </lineage>
</organism>
<name>SYY_CLOBA</name>
<feature type="chain" id="PRO_1000189273" description="Tyrosine--tRNA ligase">
    <location>
        <begin position="1"/>
        <end position="406"/>
    </location>
</feature>
<feature type="domain" description="S4 RNA-binding" evidence="1">
    <location>
        <begin position="340"/>
        <end position="404"/>
    </location>
</feature>
<feature type="short sequence motif" description="'HIGH' region">
    <location>
        <begin position="40"/>
        <end position="49"/>
    </location>
</feature>
<feature type="short sequence motif" description="'KMSKS' region">
    <location>
        <begin position="228"/>
        <end position="232"/>
    </location>
</feature>
<feature type="binding site" evidence="1">
    <location>
        <position position="35"/>
    </location>
    <ligand>
        <name>L-tyrosine</name>
        <dbReference type="ChEBI" id="CHEBI:58315"/>
    </ligand>
</feature>
<feature type="binding site" evidence="1">
    <location>
        <position position="168"/>
    </location>
    <ligand>
        <name>L-tyrosine</name>
        <dbReference type="ChEBI" id="CHEBI:58315"/>
    </ligand>
</feature>
<feature type="binding site" evidence="1">
    <location>
        <position position="172"/>
    </location>
    <ligand>
        <name>L-tyrosine</name>
        <dbReference type="ChEBI" id="CHEBI:58315"/>
    </ligand>
</feature>
<feature type="binding site" evidence="1">
    <location>
        <position position="231"/>
    </location>
    <ligand>
        <name>ATP</name>
        <dbReference type="ChEBI" id="CHEBI:30616"/>
    </ligand>
</feature>
<protein>
    <recommendedName>
        <fullName evidence="1">Tyrosine--tRNA ligase</fullName>
        <ecNumber evidence="1">6.1.1.1</ecNumber>
    </recommendedName>
    <alternativeName>
        <fullName evidence="1">Tyrosyl-tRNA synthetase</fullName>
        <shortName evidence="1">TyrRS</shortName>
    </alternativeName>
</protein>
<reference key="1">
    <citation type="submission" date="2008-05" db="EMBL/GenBank/DDBJ databases">
        <title>Complete genome sequence of Clostridium botulinum E3 str. Alaska E43.</title>
        <authorList>
            <person name="Brinkac L.M."/>
            <person name="Brown J.L."/>
            <person name="Bruce D."/>
            <person name="Detter C."/>
            <person name="Munk C."/>
            <person name="Smith L.A."/>
            <person name="Smith T.J."/>
            <person name="Sutton G."/>
            <person name="Brettin T.S."/>
        </authorList>
    </citation>
    <scope>NUCLEOTIDE SEQUENCE [LARGE SCALE GENOMIC DNA]</scope>
    <source>
        <strain>Alaska E43 / Type E3</strain>
    </source>
</reference>
<sequence length="406" mass="45653">MANVLDELLDRGYIKQFTHEEETRKLLENEKVTFYIGFDPTADSLHVGHFIAMMFMAHMQRAGHRPIALLGGGTAMVGDPSGKTDMRKMLTKEQIQHNVDSIKKQMERFIDFSDDKALIVNNADWLLDLNYVDFLREVGVHFSVNRMLSAECFKQRLEKGLSFLEFNYMLMQGYDFYVLNQKYGCKMELGGDDQWSNMIAGVELVRRKAQGDAMAMTCTLLTNSQGQKMGKTVGGALWLDADKVSPFDFYQYWRNVDDADVEKCLALLTFLPMDEVRRLGALEGAEINGAKKILAFEVTKLVHGEEEAKKAEEAANALFSGGADMSNVPTVTIAKEDLGSTVLDIIAKTKIVPSKKEGRRLIEQGGLSINGEKIIDLTRTLNEDDFEDGSALIKRGKKNYNKIEIQ</sequence>
<gene>
    <name evidence="1" type="primary">tyrS</name>
    <name type="ordered locus">CLH_2913</name>
</gene>
<evidence type="ECO:0000255" key="1">
    <source>
        <dbReference type="HAMAP-Rule" id="MF_02006"/>
    </source>
</evidence>
<proteinExistence type="inferred from homology"/>